<organism>
    <name type="scientific">Fervidobacterium nodosum (strain ATCC 35602 / DSM 5306 / Rt17-B1)</name>
    <dbReference type="NCBI Taxonomy" id="381764"/>
    <lineage>
        <taxon>Bacteria</taxon>
        <taxon>Thermotogati</taxon>
        <taxon>Thermotogota</taxon>
        <taxon>Thermotogae</taxon>
        <taxon>Thermotogales</taxon>
        <taxon>Fervidobacteriaceae</taxon>
        <taxon>Fervidobacterium</taxon>
    </lineage>
</organism>
<reference key="1">
    <citation type="submission" date="2007-07" db="EMBL/GenBank/DDBJ databases">
        <title>Complete sequence of Fervidobacterium nodosum Rt17-B1.</title>
        <authorList>
            <consortium name="US DOE Joint Genome Institute"/>
            <person name="Copeland A."/>
            <person name="Lucas S."/>
            <person name="Lapidus A."/>
            <person name="Barry K."/>
            <person name="Glavina del Rio T."/>
            <person name="Dalin E."/>
            <person name="Tice H."/>
            <person name="Pitluck S."/>
            <person name="Saunders E."/>
            <person name="Brettin T."/>
            <person name="Bruce D."/>
            <person name="Detter J.C."/>
            <person name="Han C."/>
            <person name="Schmutz J."/>
            <person name="Larimer F."/>
            <person name="Land M."/>
            <person name="Hauser L."/>
            <person name="Kyrpides N."/>
            <person name="Mikhailova N."/>
            <person name="Nelson K."/>
            <person name="Gogarten J.P."/>
            <person name="Noll K."/>
            <person name="Richardson P."/>
        </authorList>
    </citation>
    <scope>NUCLEOTIDE SEQUENCE [LARGE SCALE GENOMIC DNA]</scope>
    <source>
        <strain>ATCC 35602 / DSM 5306 / Rt17-B1</strain>
    </source>
</reference>
<sequence length="626" mass="70429">MNFFTRPDDDYRFEVIVVGGGHAGIEAAFASARMGFKTLLITGNPDNIGWASCNPAIGGSAKGIVVREIDALGGEMAKTTDETMINVRMLNTSKGPAVQALRAQIDKYSYSRTMKRKLEEQENLLIRYGIVEEILVENGKVKGVVDSFGIDYMAKAVILTTGTFLRGKIFIGRETMEAGRMGDFSARGLTNSLIKLGFTVGRFKTGTPARVLKKSIDFSKMVRQDTDDKPWAFSHFNEPKVLEKDYPCWLTHTTPESHKIIRDYLIFSPLYGEVKLIQAKGPRYCPSIEDKVVKFERESHQIFVEPEGKDTQEYYLNGLSTSLPYAAQIKMLRTIPGLENVKIVRPAYAVEYDYIDPTQLYPTLESKIIENLYFAGQINGTSGYEEAAAQGLIAGINAGLKLRGEKPIVLKRSESYIGVMIDDLVTKGVDEPYRLLSSRAEYRLLLRHDNAHLRLAKYGYQVGLIPRWFYDKIINLENNIKYHIERLENVKVPASSSVNELLQSLGTTPLTEGTRLAKLLRRPEVSYNALKHLDPEPISDTDVIEQIEIQLKYEGYINSMLEQVQIFEEYENLPIVNVIFSEVPNLSTEAREKLEKIKPLSIGQASRIPGVTPADILALLTYIKKK</sequence>
<gene>
    <name evidence="1" type="primary">mnmG</name>
    <name evidence="1" type="synonym">gidA</name>
    <name type="ordered locus">Fnod_1659</name>
</gene>
<feature type="chain" id="PRO_0000345270" description="tRNA uridine 5-carboxymethylaminomethyl modification enzyme MnmG">
    <location>
        <begin position="1"/>
        <end position="626"/>
    </location>
</feature>
<feature type="binding site" evidence="1">
    <location>
        <begin position="19"/>
        <end position="24"/>
    </location>
    <ligand>
        <name>FAD</name>
        <dbReference type="ChEBI" id="CHEBI:57692"/>
    </ligand>
</feature>
<feature type="binding site" evidence="1">
    <location>
        <begin position="281"/>
        <end position="295"/>
    </location>
    <ligand>
        <name>NAD(+)</name>
        <dbReference type="ChEBI" id="CHEBI:57540"/>
    </ligand>
</feature>
<protein>
    <recommendedName>
        <fullName evidence="1">tRNA uridine 5-carboxymethylaminomethyl modification enzyme MnmG</fullName>
    </recommendedName>
    <alternativeName>
        <fullName evidence="1">Glucose-inhibited division protein A</fullName>
    </alternativeName>
</protein>
<evidence type="ECO:0000255" key="1">
    <source>
        <dbReference type="HAMAP-Rule" id="MF_00129"/>
    </source>
</evidence>
<dbReference type="EMBL" id="CP000771">
    <property type="protein sequence ID" value="ABS61494.1"/>
    <property type="molecule type" value="Genomic_DNA"/>
</dbReference>
<dbReference type="RefSeq" id="WP_011994785.1">
    <property type="nucleotide sequence ID" value="NC_009718.1"/>
</dbReference>
<dbReference type="SMR" id="A7HNL1"/>
<dbReference type="STRING" id="381764.Fnod_1659"/>
<dbReference type="KEGG" id="fno:Fnod_1659"/>
<dbReference type="eggNOG" id="COG0445">
    <property type="taxonomic scope" value="Bacteria"/>
</dbReference>
<dbReference type="HOGENOM" id="CLU_007831_2_2_0"/>
<dbReference type="OrthoDB" id="9815560at2"/>
<dbReference type="Proteomes" id="UP000002415">
    <property type="component" value="Chromosome"/>
</dbReference>
<dbReference type="GO" id="GO:0005829">
    <property type="term" value="C:cytosol"/>
    <property type="evidence" value="ECO:0007669"/>
    <property type="project" value="TreeGrafter"/>
</dbReference>
<dbReference type="GO" id="GO:0050660">
    <property type="term" value="F:flavin adenine dinucleotide binding"/>
    <property type="evidence" value="ECO:0007669"/>
    <property type="project" value="UniProtKB-UniRule"/>
</dbReference>
<dbReference type="GO" id="GO:0030488">
    <property type="term" value="P:tRNA methylation"/>
    <property type="evidence" value="ECO:0007669"/>
    <property type="project" value="TreeGrafter"/>
</dbReference>
<dbReference type="GO" id="GO:0002098">
    <property type="term" value="P:tRNA wobble uridine modification"/>
    <property type="evidence" value="ECO:0007669"/>
    <property type="project" value="InterPro"/>
</dbReference>
<dbReference type="FunFam" id="1.10.10.1800:FF:000001">
    <property type="entry name" value="tRNA uridine 5-carboxymethylaminomethyl modification enzyme MnmG"/>
    <property type="match status" value="1"/>
</dbReference>
<dbReference type="FunFam" id="1.10.150.570:FF:000001">
    <property type="entry name" value="tRNA uridine 5-carboxymethylaminomethyl modification enzyme MnmG"/>
    <property type="match status" value="1"/>
</dbReference>
<dbReference type="FunFam" id="3.50.50.60:FF:000002">
    <property type="entry name" value="tRNA uridine 5-carboxymethylaminomethyl modification enzyme MnmG"/>
    <property type="match status" value="1"/>
</dbReference>
<dbReference type="FunFam" id="3.50.50.60:FF:000119">
    <property type="entry name" value="tRNA uridine 5-carboxymethylaminomethyl modification enzyme MnmG"/>
    <property type="match status" value="1"/>
</dbReference>
<dbReference type="Gene3D" id="3.50.50.60">
    <property type="entry name" value="FAD/NAD(P)-binding domain"/>
    <property type="match status" value="2"/>
</dbReference>
<dbReference type="Gene3D" id="1.10.150.570">
    <property type="entry name" value="GidA associated domain, C-terminal subdomain"/>
    <property type="match status" value="1"/>
</dbReference>
<dbReference type="Gene3D" id="1.10.10.1800">
    <property type="entry name" value="tRNA uridine 5-carboxymethylaminomethyl modification enzyme MnmG/GidA"/>
    <property type="match status" value="1"/>
</dbReference>
<dbReference type="HAMAP" id="MF_00129">
    <property type="entry name" value="MnmG_GidA"/>
    <property type="match status" value="1"/>
</dbReference>
<dbReference type="InterPro" id="IPR036188">
    <property type="entry name" value="FAD/NAD-bd_sf"/>
</dbReference>
<dbReference type="InterPro" id="IPR049312">
    <property type="entry name" value="GIDA_C_N"/>
</dbReference>
<dbReference type="InterPro" id="IPR004416">
    <property type="entry name" value="MnmG"/>
</dbReference>
<dbReference type="InterPro" id="IPR002218">
    <property type="entry name" value="MnmG-rel"/>
</dbReference>
<dbReference type="InterPro" id="IPR020595">
    <property type="entry name" value="MnmG-rel_CS"/>
</dbReference>
<dbReference type="InterPro" id="IPR026904">
    <property type="entry name" value="MnmG_C"/>
</dbReference>
<dbReference type="InterPro" id="IPR047001">
    <property type="entry name" value="MnmG_C_subdom"/>
</dbReference>
<dbReference type="InterPro" id="IPR044920">
    <property type="entry name" value="MnmG_C_subdom_sf"/>
</dbReference>
<dbReference type="InterPro" id="IPR040131">
    <property type="entry name" value="MnmG_N"/>
</dbReference>
<dbReference type="NCBIfam" id="TIGR00136">
    <property type="entry name" value="mnmG_gidA"/>
    <property type="match status" value="1"/>
</dbReference>
<dbReference type="PANTHER" id="PTHR11806">
    <property type="entry name" value="GLUCOSE INHIBITED DIVISION PROTEIN A"/>
    <property type="match status" value="1"/>
</dbReference>
<dbReference type="PANTHER" id="PTHR11806:SF0">
    <property type="entry name" value="PROTEIN MTO1 HOMOLOG, MITOCHONDRIAL"/>
    <property type="match status" value="1"/>
</dbReference>
<dbReference type="Pfam" id="PF01134">
    <property type="entry name" value="GIDA"/>
    <property type="match status" value="1"/>
</dbReference>
<dbReference type="Pfam" id="PF21680">
    <property type="entry name" value="GIDA_C_1st"/>
    <property type="match status" value="1"/>
</dbReference>
<dbReference type="Pfam" id="PF13932">
    <property type="entry name" value="SAM_GIDA_C"/>
    <property type="match status" value="1"/>
</dbReference>
<dbReference type="PRINTS" id="PR00411">
    <property type="entry name" value="PNDRDTASEI"/>
</dbReference>
<dbReference type="SMART" id="SM01228">
    <property type="entry name" value="GIDA_assoc_3"/>
    <property type="match status" value="1"/>
</dbReference>
<dbReference type="SUPFAM" id="SSF51905">
    <property type="entry name" value="FAD/NAD(P)-binding domain"/>
    <property type="match status" value="1"/>
</dbReference>
<dbReference type="PROSITE" id="PS01280">
    <property type="entry name" value="GIDA_1"/>
    <property type="match status" value="1"/>
</dbReference>
<dbReference type="PROSITE" id="PS01281">
    <property type="entry name" value="GIDA_2"/>
    <property type="match status" value="1"/>
</dbReference>
<proteinExistence type="inferred from homology"/>
<keyword id="KW-0963">Cytoplasm</keyword>
<keyword id="KW-0274">FAD</keyword>
<keyword id="KW-0285">Flavoprotein</keyword>
<keyword id="KW-0520">NAD</keyword>
<keyword id="KW-1185">Reference proteome</keyword>
<keyword id="KW-0819">tRNA processing</keyword>
<accession>A7HNL1</accession>
<comment type="function">
    <text evidence="1">NAD-binding protein involved in the addition of a carboxymethylaminomethyl (cmnm) group at the wobble position (U34) of certain tRNAs, forming tRNA-cmnm(5)s(2)U34.</text>
</comment>
<comment type="cofactor">
    <cofactor evidence="1">
        <name>FAD</name>
        <dbReference type="ChEBI" id="CHEBI:57692"/>
    </cofactor>
</comment>
<comment type="subunit">
    <text evidence="1">Homodimer. Heterotetramer of two MnmE and two MnmG subunits.</text>
</comment>
<comment type="subcellular location">
    <subcellularLocation>
        <location evidence="1">Cytoplasm</location>
    </subcellularLocation>
</comment>
<comment type="similarity">
    <text evidence="1">Belongs to the MnmG family.</text>
</comment>
<name>MNMG_FERNB</name>